<protein>
    <recommendedName>
        <fullName evidence="1">Proline--tRNA ligase</fullName>
        <ecNumber evidence="1">6.1.1.15</ecNumber>
    </recommendedName>
    <alternativeName>
        <fullName evidence="1">Prolyl-tRNA synthetase</fullName>
        <shortName evidence="1">ProRS</shortName>
    </alternativeName>
</protein>
<proteinExistence type="inferred from homology"/>
<name>SYP_ACISJ</name>
<feature type="chain" id="PRO_0000288305" description="Proline--tRNA ligase">
    <location>
        <begin position="1"/>
        <end position="581"/>
    </location>
</feature>
<organism>
    <name type="scientific">Acidovorax sp. (strain JS42)</name>
    <dbReference type="NCBI Taxonomy" id="232721"/>
    <lineage>
        <taxon>Bacteria</taxon>
        <taxon>Pseudomonadati</taxon>
        <taxon>Pseudomonadota</taxon>
        <taxon>Betaproteobacteria</taxon>
        <taxon>Burkholderiales</taxon>
        <taxon>Comamonadaceae</taxon>
        <taxon>Acidovorax</taxon>
    </lineage>
</organism>
<keyword id="KW-0030">Aminoacyl-tRNA synthetase</keyword>
<keyword id="KW-0067">ATP-binding</keyword>
<keyword id="KW-0963">Cytoplasm</keyword>
<keyword id="KW-0436">Ligase</keyword>
<keyword id="KW-0547">Nucleotide-binding</keyword>
<keyword id="KW-0648">Protein biosynthesis</keyword>
<dbReference type="EC" id="6.1.1.15" evidence="1"/>
<dbReference type="EMBL" id="CP000539">
    <property type="protein sequence ID" value="ABM41088.1"/>
    <property type="molecule type" value="Genomic_DNA"/>
</dbReference>
<dbReference type="SMR" id="A1W4B3"/>
<dbReference type="STRING" id="232721.Ajs_0846"/>
<dbReference type="KEGG" id="ajs:Ajs_0846"/>
<dbReference type="eggNOG" id="COG0442">
    <property type="taxonomic scope" value="Bacteria"/>
</dbReference>
<dbReference type="HOGENOM" id="CLU_016739_0_0_4"/>
<dbReference type="Proteomes" id="UP000000645">
    <property type="component" value="Chromosome"/>
</dbReference>
<dbReference type="GO" id="GO:0005829">
    <property type="term" value="C:cytosol"/>
    <property type="evidence" value="ECO:0007669"/>
    <property type="project" value="TreeGrafter"/>
</dbReference>
<dbReference type="GO" id="GO:0002161">
    <property type="term" value="F:aminoacyl-tRNA deacylase activity"/>
    <property type="evidence" value="ECO:0007669"/>
    <property type="project" value="InterPro"/>
</dbReference>
<dbReference type="GO" id="GO:0005524">
    <property type="term" value="F:ATP binding"/>
    <property type="evidence" value="ECO:0007669"/>
    <property type="project" value="UniProtKB-UniRule"/>
</dbReference>
<dbReference type="GO" id="GO:0004827">
    <property type="term" value="F:proline-tRNA ligase activity"/>
    <property type="evidence" value="ECO:0007669"/>
    <property type="project" value="UniProtKB-UniRule"/>
</dbReference>
<dbReference type="GO" id="GO:0006433">
    <property type="term" value="P:prolyl-tRNA aminoacylation"/>
    <property type="evidence" value="ECO:0007669"/>
    <property type="project" value="UniProtKB-UniRule"/>
</dbReference>
<dbReference type="CDD" id="cd04334">
    <property type="entry name" value="ProRS-INS"/>
    <property type="match status" value="1"/>
</dbReference>
<dbReference type="CDD" id="cd00861">
    <property type="entry name" value="ProRS_anticodon_short"/>
    <property type="match status" value="1"/>
</dbReference>
<dbReference type="CDD" id="cd00779">
    <property type="entry name" value="ProRS_core_prok"/>
    <property type="match status" value="1"/>
</dbReference>
<dbReference type="FunFam" id="3.30.930.10:FF:000042">
    <property type="entry name" value="probable proline--tRNA ligase, mitochondrial"/>
    <property type="match status" value="1"/>
</dbReference>
<dbReference type="Gene3D" id="3.40.50.800">
    <property type="entry name" value="Anticodon-binding domain"/>
    <property type="match status" value="1"/>
</dbReference>
<dbReference type="Gene3D" id="3.30.930.10">
    <property type="entry name" value="Bira Bifunctional Protein, Domain 2"/>
    <property type="match status" value="2"/>
</dbReference>
<dbReference type="Gene3D" id="3.90.960.10">
    <property type="entry name" value="YbaK/aminoacyl-tRNA synthetase-associated domain"/>
    <property type="match status" value="1"/>
</dbReference>
<dbReference type="HAMAP" id="MF_01569">
    <property type="entry name" value="Pro_tRNA_synth_type1"/>
    <property type="match status" value="1"/>
</dbReference>
<dbReference type="InterPro" id="IPR002314">
    <property type="entry name" value="aa-tRNA-synt_IIb"/>
</dbReference>
<dbReference type="InterPro" id="IPR006195">
    <property type="entry name" value="aa-tRNA-synth_II"/>
</dbReference>
<dbReference type="InterPro" id="IPR045864">
    <property type="entry name" value="aa-tRNA-synth_II/BPL/LPL"/>
</dbReference>
<dbReference type="InterPro" id="IPR004154">
    <property type="entry name" value="Anticodon-bd"/>
</dbReference>
<dbReference type="InterPro" id="IPR036621">
    <property type="entry name" value="Anticodon-bd_dom_sf"/>
</dbReference>
<dbReference type="InterPro" id="IPR002316">
    <property type="entry name" value="Pro-tRNA-ligase_IIa"/>
</dbReference>
<dbReference type="InterPro" id="IPR004500">
    <property type="entry name" value="Pro-tRNA-synth_IIa_bac-type"/>
</dbReference>
<dbReference type="InterPro" id="IPR023717">
    <property type="entry name" value="Pro-tRNA-Synthase_IIa_type1"/>
</dbReference>
<dbReference type="InterPro" id="IPR050062">
    <property type="entry name" value="Pro-tRNA_synthetase"/>
</dbReference>
<dbReference type="InterPro" id="IPR044140">
    <property type="entry name" value="ProRS_anticodon_short"/>
</dbReference>
<dbReference type="InterPro" id="IPR033730">
    <property type="entry name" value="ProRS_core_prok"/>
</dbReference>
<dbReference type="InterPro" id="IPR036754">
    <property type="entry name" value="YbaK/aa-tRNA-synt-asso_dom_sf"/>
</dbReference>
<dbReference type="InterPro" id="IPR007214">
    <property type="entry name" value="YbaK/aa-tRNA-synth-assoc-dom"/>
</dbReference>
<dbReference type="NCBIfam" id="NF006625">
    <property type="entry name" value="PRK09194.1"/>
    <property type="match status" value="1"/>
</dbReference>
<dbReference type="NCBIfam" id="TIGR00409">
    <property type="entry name" value="proS_fam_II"/>
    <property type="match status" value="1"/>
</dbReference>
<dbReference type="PANTHER" id="PTHR42753">
    <property type="entry name" value="MITOCHONDRIAL RIBOSOME PROTEIN L39/PROLYL-TRNA LIGASE FAMILY MEMBER"/>
    <property type="match status" value="1"/>
</dbReference>
<dbReference type="PANTHER" id="PTHR42753:SF2">
    <property type="entry name" value="PROLINE--TRNA LIGASE"/>
    <property type="match status" value="1"/>
</dbReference>
<dbReference type="Pfam" id="PF03129">
    <property type="entry name" value="HGTP_anticodon"/>
    <property type="match status" value="1"/>
</dbReference>
<dbReference type="Pfam" id="PF00587">
    <property type="entry name" value="tRNA-synt_2b"/>
    <property type="match status" value="1"/>
</dbReference>
<dbReference type="Pfam" id="PF04073">
    <property type="entry name" value="tRNA_edit"/>
    <property type="match status" value="1"/>
</dbReference>
<dbReference type="PIRSF" id="PIRSF001535">
    <property type="entry name" value="ProRS_1"/>
    <property type="match status" value="1"/>
</dbReference>
<dbReference type="PRINTS" id="PR01046">
    <property type="entry name" value="TRNASYNTHPRO"/>
</dbReference>
<dbReference type="SUPFAM" id="SSF52954">
    <property type="entry name" value="Class II aaRS ABD-related"/>
    <property type="match status" value="1"/>
</dbReference>
<dbReference type="SUPFAM" id="SSF55681">
    <property type="entry name" value="Class II aaRS and biotin synthetases"/>
    <property type="match status" value="1"/>
</dbReference>
<dbReference type="SUPFAM" id="SSF55826">
    <property type="entry name" value="YbaK/ProRS associated domain"/>
    <property type="match status" value="1"/>
</dbReference>
<dbReference type="PROSITE" id="PS50862">
    <property type="entry name" value="AA_TRNA_LIGASE_II"/>
    <property type="match status" value="1"/>
</dbReference>
<accession>A1W4B3</accession>
<gene>
    <name evidence="1" type="primary">proS</name>
    <name type="ordered locus">Ajs_0846</name>
</gene>
<comment type="function">
    <text evidence="1">Catalyzes the attachment of proline to tRNA(Pro) in a two-step reaction: proline is first activated by ATP to form Pro-AMP and then transferred to the acceptor end of tRNA(Pro). As ProRS can inadvertently accommodate and process non-cognate amino acids such as alanine and cysteine, to avoid such errors it has two additional distinct editing activities against alanine. One activity is designated as 'pretransfer' editing and involves the tRNA(Pro)-independent hydrolysis of activated Ala-AMP. The other activity is designated 'posttransfer' editing and involves deacylation of mischarged Ala-tRNA(Pro). The misacylated Cys-tRNA(Pro) is not edited by ProRS.</text>
</comment>
<comment type="catalytic activity">
    <reaction evidence="1">
        <text>tRNA(Pro) + L-proline + ATP = L-prolyl-tRNA(Pro) + AMP + diphosphate</text>
        <dbReference type="Rhea" id="RHEA:14305"/>
        <dbReference type="Rhea" id="RHEA-COMP:9700"/>
        <dbReference type="Rhea" id="RHEA-COMP:9702"/>
        <dbReference type="ChEBI" id="CHEBI:30616"/>
        <dbReference type="ChEBI" id="CHEBI:33019"/>
        <dbReference type="ChEBI" id="CHEBI:60039"/>
        <dbReference type="ChEBI" id="CHEBI:78442"/>
        <dbReference type="ChEBI" id="CHEBI:78532"/>
        <dbReference type="ChEBI" id="CHEBI:456215"/>
        <dbReference type="EC" id="6.1.1.15"/>
    </reaction>
</comment>
<comment type="subunit">
    <text evidence="1">Homodimer.</text>
</comment>
<comment type="subcellular location">
    <subcellularLocation>
        <location evidence="1">Cytoplasm</location>
    </subcellularLocation>
</comment>
<comment type="domain">
    <text evidence="1">Consists of three domains: the N-terminal catalytic domain, the editing domain and the C-terminal anticodon-binding domain.</text>
</comment>
<comment type="similarity">
    <text evidence="1">Belongs to the class-II aminoacyl-tRNA synthetase family. ProS type 1 subfamily.</text>
</comment>
<evidence type="ECO:0000255" key="1">
    <source>
        <dbReference type="HAMAP-Rule" id="MF_01569"/>
    </source>
</evidence>
<sequence>MKASQFFISTLKEAPADAEVVSHQLMMRAGLIKKLGAGIYNYMPMGLRVIRKVEAIVREEMNRAGAVECTMPVVQPAELWQETGRFDKMGPELLRIHDRHGRDFVIQPTSEEVVTDIARQELRSYKQLPKNLYQIQTKFRDERRPRFGLMRGREFIMKDAYSFDRDQAGAKASYQVMAQAYRRIFDRFGLRYRAVAADSGAIGGDLSEEFQVIAATGEDAIVYCPASDYAANMEKAEALAPAGARPAAKQPLTVTPTPGKSTCADVAELLSVPLSTTVKSLVLATDETDAAGEIIRSQVWLLLLRGDHDMNEIKVAKVPGLDAGFRFATVAEIADHFGCKPGYLGPLNLQKPVKLVVDRDVAVMADWICGANQEGHHITGVNWGRDLPEPDMVADLRNVVAGDLSPDGQGELAIERGIEVGHVFYLGTKYSKAMNATFLGEDGKPAFFEMGCYGIGVTRLPAAAIEQNHDERGIIWPDAIAPFTVVICPVGMDRSEAVKAQAESLYADLLAAGVDVILDDRGERPGAMFADWELIGVPHRVTIGDKSLKEGQVEYQHRRDASATKVGVADILAHVKERLAA</sequence>
<reference key="1">
    <citation type="submission" date="2006-12" db="EMBL/GenBank/DDBJ databases">
        <title>Complete sequence of chromosome 1 of Acidovorax sp. JS42.</title>
        <authorList>
            <person name="Copeland A."/>
            <person name="Lucas S."/>
            <person name="Lapidus A."/>
            <person name="Barry K."/>
            <person name="Detter J.C."/>
            <person name="Glavina del Rio T."/>
            <person name="Dalin E."/>
            <person name="Tice H."/>
            <person name="Pitluck S."/>
            <person name="Chertkov O."/>
            <person name="Brettin T."/>
            <person name="Bruce D."/>
            <person name="Han C."/>
            <person name="Tapia R."/>
            <person name="Gilna P."/>
            <person name="Schmutz J."/>
            <person name="Larimer F."/>
            <person name="Land M."/>
            <person name="Hauser L."/>
            <person name="Kyrpides N."/>
            <person name="Kim E."/>
            <person name="Stahl D."/>
            <person name="Richardson P."/>
        </authorList>
    </citation>
    <scope>NUCLEOTIDE SEQUENCE [LARGE SCALE GENOMIC DNA]</scope>
    <source>
        <strain>JS42</strain>
    </source>
</reference>